<protein>
    <recommendedName>
        <fullName>Homeobox protein abdominal-A homolog</fullName>
    </recommendedName>
    <alternativeName>
        <fullName>H15</fullName>
    </alternativeName>
</protein>
<organism>
    <name type="scientific">Apis mellifera</name>
    <name type="common">Honeybee</name>
    <dbReference type="NCBI Taxonomy" id="7460"/>
    <lineage>
        <taxon>Eukaryota</taxon>
        <taxon>Metazoa</taxon>
        <taxon>Ecdysozoa</taxon>
        <taxon>Arthropoda</taxon>
        <taxon>Hexapoda</taxon>
        <taxon>Insecta</taxon>
        <taxon>Pterygota</taxon>
        <taxon>Neoptera</taxon>
        <taxon>Endopterygota</taxon>
        <taxon>Hymenoptera</taxon>
        <taxon>Apocrita</taxon>
        <taxon>Aculeata</taxon>
        <taxon>Apoidea</taxon>
        <taxon>Anthophila</taxon>
        <taxon>Apidae</taxon>
        <taxon>Apis</taxon>
    </lineage>
</organism>
<name>ABDA_APIME</name>
<dbReference type="EMBL" id="M29494">
    <property type="protein sequence ID" value="AAA27729.1"/>
    <property type="molecule type" value="Genomic_DNA"/>
</dbReference>
<dbReference type="PIR" id="B34510">
    <property type="entry name" value="B34510"/>
</dbReference>
<dbReference type="SMR" id="P15856"/>
<dbReference type="STRING" id="7460.P15856"/>
<dbReference type="PaxDb" id="7460-GB51287-PA"/>
<dbReference type="EnsemblMetazoa" id="XM_016917154">
    <property type="protein sequence ID" value="XP_016772643"/>
    <property type="gene ID" value="LOC410643"/>
</dbReference>
<dbReference type="eggNOG" id="KOG0489">
    <property type="taxonomic scope" value="Eukaryota"/>
</dbReference>
<dbReference type="InParanoid" id="P15856"/>
<dbReference type="Proteomes" id="UP000005203">
    <property type="component" value="Unplaced"/>
</dbReference>
<dbReference type="GO" id="GO:0005634">
    <property type="term" value="C:nucleus"/>
    <property type="evidence" value="ECO:0007669"/>
    <property type="project" value="UniProtKB-SubCell"/>
</dbReference>
<dbReference type="GO" id="GO:0000981">
    <property type="term" value="F:DNA-binding transcription factor activity, RNA polymerase II-specific"/>
    <property type="evidence" value="ECO:0007669"/>
    <property type="project" value="InterPro"/>
</dbReference>
<dbReference type="GO" id="GO:0000978">
    <property type="term" value="F:RNA polymerase II cis-regulatory region sequence-specific DNA binding"/>
    <property type="evidence" value="ECO:0007669"/>
    <property type="project" value="TreeGrafter"/>
</dbReference>
<dbReference type="GO" id="GO:0009952">
    <property type="term" value="P:anterior/posterior pattern specification"/>
    <property type="evidence" value="ECO:0007669"/>
    <property type="project" value="TreeGrafter"/>
</dbReference>
<dbReference type="GO" id="GO:0000122">
    <property type="term" value="P:negative regulation of transcription by RNA polymerase II"/>
    <property type="evidence" value="ECO:0007669"/>
    <property type="project" value="TreeGrafter"/>
</dbReference>
<dbReference type="CDD" id="cd00086">
    <property type="entry name" value="homeodomain"/>
    <property type="match status" value="1"/>
</dbReference>
<dbReference type="FunFam" id="1.10.10.60:FF:000193">
    <property type="entry name" value="Ultrabithorax, isoform C"/>
    <property type="match status" value="1"/>
</dbReference>
<dbReference type="Gene3D" id="1.10.10.60">
    <property type="entry name" value="Homeodomain-like"/>
    <property type="match status" value="1"/>
</dbReference>
<dbReference type="InterPro" id="IPR050296">
    <property type="entry name" value="Antp_homeobox"/>
</dbReference>
<dbReference type="InterPro" id="IPR001356">
    <property type="entry name" value="HD"/>
</dbReference>
<dbReference type="InterPro" id="IPR020479">
    <property type="entry name" value="HD_metazoa"/>
</dbReference>
<dbReference type="InterPro" id="IPR017970">
    <property type="entry name" value="Homeobox_CS"/>
</dbReference>
<dbReference type="InterPro" id="IPR009057">
    <property type="entry name" value="Homeodomain-like_sf"/>
</dbReference>
<dbReference type="PANTHER" id="PTHR45659:SF4">
    <property type="entry name" value="HOMEOBOX PROTEIN ABDOMINAL-A"/>
    <property type="match status" value="1"/>
</dbReference>
<dbReference type="PANTHER" id="PTHR45659">
    <property type="entry name" value="HOMEOBOX PROTEIN HOX"/>
    <property type="match status" value="1"/>
</dbReference>
<dbReference type="Pfam" id="PF00046">
    <property type="entry name" value="Homeodomain"/>
    <property type="match status" value="1"/>
</dbReference>
<dbReference type="PRINTS" id="PR00024">
    <property type="entry name" value="HOMEOBOX"/>
</dbReference>
<dbReference type="SMART" id="SM00389">
    <property type="entry name" value="HOX"/>
    <property type="match status" value="1"/>
</dbReference>
<dbReference type="SUPFAM" id="SSF46689">
    <property type="entry name" value="Homeodomain-like"/>
    <property type="match status" value="1"/>
</dbReference>
<dbReference type="PROSITE" id="PS00027">
    <property type="entry name" value="HOMEOBOX_1"/>
    <property type="match status" value="1"/>
</dbReference>
<dbReference type="PROSITE" id="PS50071">
    <property type="entry name" value="HOMEOBOX_2"/>
    <property type="match status" value="1"/>
</dbReference>
<evidence type="ECO:0000255" key="1">
    <source>
        <dbReference type="PROSITE-ProRule" id="PRU00108"/>
    </source>
</evidence>
<evidence type="ECO:0000305" key="2"/>
<reference key="1">
    <citation type="journal article" date="1989" name="Proc. Natl. Acad. Sci. U.S.A.">
        <title>Comparison of homeobox-containing genes of the honeybee and Drosophila.</title>
        <authorList>
            <person name="Walldorf U."/>
            <person name="Fleig R."/>
            <person name="Gehring W.J."/>
        </authorList>
    </citation>
    <scope>NUCLEOTIDE SEQUENCE [GENOMIC DNA]</scope>
</reference>
<gene>
    <name type="primary">ABD-A</name>
</gene>
<accession>P15856</accession>
<sequence length="74" mass="9195">PGPNGCPRRRGRQTYTRFQTLELEKEFHYNHYLTRRRRIEIAHALCLTERQIKIWFQNRRMKLKKELRAVKEIN</sequence>
<proteinExistence type="inferred from homology"/>
<feature type="chain" id="PRO_0000200251" description="Homeobox protein abdominal-A homolog">
    <location>
        <begin position="1" status="less than"/>
        <end position="74" status="greater than"/>
    </location>
</feature>
<feature type="DNA-binding region" description="Homeobox" evidence="1">
    <location>
        <begin position="8"/>
        <end position="67"/>
    </location>
</feature>
<feature type="non-terminal residue">
    <location>
        <position position="1"/>
    </location>
</feature>
<feature type="non-terminal residue">
    <location>
        <position position="74"/>
    </location>
</feature>
<keyword id="KW-0217">Developmental protein</keyword>
<keyword id="KW-0238">DNA-binding</keyword>
<keyword id="KW-0371">Homeobox</keyword>
<keyword id="KW-0539">Nucleus</keyword>
<keyword id="KW-1185">Reference proteome</keyword>
<comment type="function">
    <text>Sequence-specific transcription factor which is part of a developmental regulatory system that provides cells with specific positional identities on the anterior-posterior axis.</text>
</comment>
<comment type="subcellular location">
    <subcellularLocation>
        <location evidence="2">Nucleus</location>
    </subcellularLocation>
</comment>
<comment type="similarity">
    <text evidence="2">Belongs to the Antp homeobox family.</text>
</comment>